<dbReference type="EC" id="7.6.2.-" evidence="1"/>
<dbReference type="EMBL" id="CP000237">
    <property type="protein sequence ID" value="ABD46430.1"/>
    <property type="molecule type" value="Genomic_DNA"/>
</dbReference>
<dbReference type="RefSeq" id="WP_011451711.1">
    <property type="nucleotide sequence ID" value="NC_007798.1"/>
</dbReference>
<dbReference type="SMR" id="Q2GE91"/>
<dbReference type="STRING" id="222891.NSE_0315"/>
<dbReference type="KEGG" id="nse:NSE_0315"/>
<dbReference type="eggNOG" id="COG1136">
    <property type="taxonomic scope" value="Bacteria"/>
</dbReference>
<dbReference type="HOGENOM" id="CLU_000604_1_22_5"/>
<dbReference type="OrthoDB" id="9802264at2"/>
<dbReference type="Proteomes" id="UP000001942">
    <property type="component" value="Chromosome"/>
</dbReference>
<dbReference type="GO" id="GO:0005886">
    <property type="term" value="C:plasma membrane"/>
    <property type="evidence" value="ECO:0007669"/>
    <property type="project" value="UniProtKB-SubCell"/>
</dbReference>
<dbReference type="GO" id="GO:0005524">
    <property type="term" value="F:ATP binding"/>
    <property type="evidence" value="ECO:0007669"/>
    <property type="project" value="UniProtKB-KW"/>
</dbReference>
<dbReference type="GO" id="GO:0016887">
    <property type="term" value="F:ATP hydrolysis activity"/>
    <property type="evidence" value="ECO:0007669"/>
    <property type="project" value="InterPro"/>
</dbReference>
<dbReference type="GO" id="GO:0022857">
    <property type="term" value="F:transmembrane transporter activity"/>
    <property type="evidence" value="ECO:0007669"/>
    <property type="project" value="TreeGrafter"/>
</dbReference>
<dbReference type="CDD" id="cd03255">
    <property type="entry name" value="ABC_MJ0796_LolCDE_FtsE"/>
    <property type="match status" value="1"/>
</dbReference>
<dbReference type="Gene3D" id="3.40.50.300">
    <property type="entry name" value="P-loop containing nucleotide triphosphate hydrolases"/>
    <property type="match status" value="1"/>
</dbReference>
<dbReference type="InterPro" id="IPR003593">
    <property type="entry name" value="AAA+_ATPase"/>
</dbReference>
<dbReference type="InterPro" id="IPR003439">
    <property type="entry name" value="ABC_transporter-like_ATP-bd"/>
</dbReference>
<dbReference type="InterPro" id="IPR017871">
    <property type="entry name" value="ABC_transporter-like_CS"/>
</dbReference>
<dbReference type="InterPro" id="IPR015854">
    <property type="entry name" value="ABC_transpr_LolD-like"/>
</dbReference>
<dbReference type="InterPro" id="IPR017911">
    <property type="entry name" value="MacB-like_ATP-bd"/>
</dbReference>
<dbReference type="InterPro" id="IPR027417">
    <property type="entry name" value="P-loop_NTPase"/>
</dbReference>
<dbReference type="PANTHER" id="PTHR24220">
    <property type="entry name" value="IMPORT ATP-BINDING PROTEIN"/>
    <property type="match status" value="1"/>
</dbReference>
<dbReference type="PANTHER" id="PTHR24220:SF689">
    <property type="entry name" value="LIPOPROTEIN-RELEASING SYSTEM ATP-BINDING PROTEIN LOLD"/>
    <property type="match status" value="1"/>
</dbReference>
<dbReference type="Pfam" id="PF00005">
    <property type="entry name" value="ABC_tran"/>
    <property type="match status" value="1"/>
</dbReference>
<dbReference type="SMART" id="SM00382">
    <property type="entry name" value="AAA"/>
    <property type="match status" value="1"/>
</dbReference>
<dbReference type="SUPFAM" id="SSF52540">
    <property type="entry name" value="P-loop containing nucleoside triphosphate hydrolases"/>
    <property type="match status" value="1"/>
</dbReference>
<dbReference type="PROSITE" id="PS00211">
    <property type="entry name" value="ABC_TRANSPORTER_1"/>
    <property type="match status" value="1"/>
</dbReference>
<dbReference type="PROSITE" id="PS50893">
    <property type="entry name" value="ABC_TRANSPORTER_2"/>
    <property type="match status" value="1"/>
</dbReference>
<dbReference type="PROSITE" id="PS51244">
    <property type="entry name" value="LOLD"/>
    <property type="match status" value="1"/>
</dbReference>
<reference key="1">
    <citation type="journal article" date="2006" name="PLoS Genet.">
        <title>Comparative genomics of emerging human ehrlichiosis agents.</title>
        <authorList>
            <person name="Dunning Hotopp J.C."/>
            <person name="Lin M."/>
            <person name="Madupu R."/>
            <person name="Crabtree J."/>
            <person name="Angiuoli S.V."/>
            <person name="Eisen J.A."/>
            <person name="Seshadri R."/>
            <person name="Ren Q."/>
            <person name="Wu M."/>
            <person name="Utterback T.R."/>
            <person name="Smith S."/>
            <person name="Lewis M."/>
            <person name="Khouri H."/>
            <person name="Zhang C."/>
            <person name="Niu H."/>
            <person name="Lin Q."/>
            <person name="Ohashi N."/>
            <person name="Zhi N."/>
            <person name="Nelson W.C."/>
            <person name="Brinkac L.M."/>
            <person name="Dodson R.J."/>
            <person name="Rosovitz M.J."/>
            <person name="Sundaram J.P."/>
            <person name="Daugherty S.C."/>
            <person name="Davidsen T."/>
            <person name="Durkin A.S."/>
            <person name="Gwinn M.L."/>
            <person name="Haft D.H."/>
            <person name="Selengut J.D."/>
            <person name="Sullivan S.A."/>
            <person name="Zafar N."/>
            <person name="Zhou L."/>
            <person name="Benahmed F."/>
            <person name="Forberger H."/>
            <person name="Halpin R."/>
            <person name="Mulligan S."/>
            <person name="Robinson J."/>
            <person name="White O."/>
            <person name="Rikihisa Y."/>
            <person name="Tettelin H."/>
        </authorList>
    </citation>
    <scope>NUCLEOTIDE SEQUENCE [LARGE SCALE GENOMIC DNA]</scope>
    <source>
        <strain>ATCC VR-367 / Miyayama</strain>
    </source>
</reference>
<protein>
    <recommendedName>
        <fullName evidence="1">Lipoprotein-releasing system ATP-binding protein LolD</fullName>
        <ecNumber evidence="1">7.6.2.-</ecNumber>
    </recommendedName>
</protein>
<gene>
    <name evidence="1" type="primary">lolD</name>
    <name type="ordered locus">NSE_0315</name>
</gene>
<name>LOLD_NEOSM</name>
<sequence>MSGLALEFCNVSKFFRDKTEQEIAILRNTNLQIHTGEIIALIGASGVGKTTTLQIAGLLNKQDSGKVKICGKEASHLDTTLRRKEIGFIYQFHHLLSELNVLKNVMLPLLISGTPKTIAEKRAKELLEFLKLEKVAYQPVDTLSGGQKQRVAVARAVIKKPALIIADEPTGNLDPNTAKDVFDLVCSFAKENGSAVFLATHDPSFLQKASRVLEIVNHSLISSI</sequence>
<accession>Q2GE91</accession>
<comment type="function">
    <text evidence="1">Part of the ABC transporter complex LolCDE involved in the translocation of mature outer membrane-directed lipoproteins, from the inner membrane to the periplasmic chaperone, LolA. Responsible for the formation of the LolA-lipoprotein complex in an ATP-dependent manner.</text>
</comment>
<comment type="subunit">
    <text evidence="1">The complex is composed of two ATP-binding proteins (LolD) and two transmembrane proteins (LolC and LolE).</text>
</comment>
<comment type="subcellular location">
    <subcellularLocation>
        <location evidence="1">Cell inner membrane</location>
        <topology evidence="1">Peripheral membrane protein</topology>
    </subcellularLocation>
</comment>
<comment type="similarity">
    <text evidence="1">Belongs to the ABC transporter superfamily. Lipoprotein translocase (TC 3.A.1.125) family.</text>
</comment>
<feature type="chain" id="PRO_0000272110" description="Lipoprotein-releasing system ATP-binding protein LolD">
    <location>
        <begin position="1"/>
        <end position="224"/>
    </location>
</feature>
<feature type="domain" description="ABC transporter" evidence="1">
    <location>
        <begin position="6"/>
        <end position="224"/>
    </location>
</feature>
<feature type="binding site" evidence="1">
    <location>
        <begin position="43"/>
        <end position="50"/>
    </location>
    <ligand>
        <name>ATP</name>
        <dbReference type="ChEBI" id="CHEBI:30616"/>
    </ligand>
</feature>
<organism>
    <name type="scientific">Neorickettsia sennetsu (strain ATCC VR-367 / Miyayama)</name>
    <name type="common">Ehrlichia sennetsu</name>
    <dbReference type="NCBI Taxonomy" id="222891"/>
    <lineage>
        <taxon>Bacteria</taxon>
        <taxon>Pseudomonadati</taxon>
        <taxon>Pseudomonadota</taxon>
        <taxon>Alphaproteobacteria</taxon>
        <taxon>Rickettsiales</taxon>
        <taxon>Anaplasmataceae</taxon>
        <taxon>Neorickettsia</taxon>
    </lineage>
</organism>
<keyword id="KW-0067">ATP-binding</keyword>
<keyword id="KW-0997">Cell inner membrane</keyword>
<keyword id="KW-1003">Cell membrane</keyword>
<keyword id="KW-0472">Membrane</keyword>
<keyword id="KW-0547">Nucleotide-binding</keyword>
<keyword id="KW-1278">Translocase</keyword>
<keyword id="KW-0813">Transport</keyword>
<evidence type="ECO:0000255" key="1">
    <source>
        <dbReference type="HAMAP-Rule" id="MF_01708"/>
    </source>
</evidence>
<proteinExistence type="inferred from homology"/>